<dbReference type="EMBL" id="AE000516">
    <property type="protein sequence ID" value="AAK48124.1"/>
    <property type="status" value="ALT_INIT"/>
    <property type="molecule type" value="Genomic_DNA"/>
</dbReference>
<dbReference type="PIR" id="E70788">
    <property type="entry name" value="E70788"/>
</dbReference>
<dbReference type="SMR" id="P9WKX6"/>
<dbReference type="KEGG" id="mtc:MT3760"/>
<dbReference type="PATRIC" id="fig|83331.31.peg.4049"/>
<dbReference type="HOGENOM" id="CLU_082953_0_0_11"/>
<dbReference type="Proteomes" id="UP000001020">
    <property type="component" value="Chromosome"/>
</dbReference>
<dbReference type="GO" id="GO:0009898">
    <property type="term" value="C:cytoplasmic side of plasma membrane"/>
    <property type="evidence" value="ECO:0007669"/>
    <property type="project" value="TreeGrafter"/>
</dbReference>
<dbReference type="GO" id="GO:0005829">
    <property type="term" value="C:cytosol"/>
    <property type="evidence" value="ECO:0007669"/>
    <property type="project" value="TreeGrafter"/>
</dbReference>
<dbReference type="GO" id="GO:0005524">
    <property type="term" value="F:ATP binding"/>
    <property type="evidence" value="ECO:0007669"/>
    <property type="project" value="TreeGrafter"/>
</dbReference>
<dbReference type="GO" id="GO:0016887">
    <property type="term" value="F:ATP hydrolysis activity"/>
    <property type="evidence" value="ECO:0007669"/>
    <property type="project" value="TreeGrafter"/>
</dbReference>
<dbReference type="GO" id="GO:0051782">
    <property type="term" value="P:negative regulation of cell division"/>
    <property type="evidence" value="ECO:0007669"/>
    <property type="project" value="TreeGrafter"/>
</dbReference>
<dbReference type="FunFam" id="3.40.50.300:FF:003301">
    <property type="entry name" value="Helicase/secretion CpaE-like protein"/>
    <property type="match status" value="1"/>
</dbReference>
<dbReference type="Gene3D" id="3.40.50.300">
    <property type="entry name" value="P-loop containing nucleotide triphosphate hydrolases"/>
    <property type="match status" value="1"/>
</dbReference>
<dbReference type="InterPro" id="IPR027417">
    <property type="entry name" value="P-loop_NTPase"/>
</dbReference>
<dbReference type="InterPro" id="IPR050625">
    <property type="entry name" value="ParA/MinD_ATPase"/>
</dbReference>
<dbReference type="InterPro" id="IPR022521">
    <property type="entry name" value="Ssd-like"/>
</dbReference>
<dbReference type="NCBIfam" id="TIGR03815">
    <property type="entry name" value="CpaE_hom_Actino"/>
    <property type="match status" value="1"/>
</dbReference>
<dbReference type="PANTHER" id="PTHR43384:SF11">
    <property type="entry name" value="SEPTUM SITE DETERMINING PROTEIN"/>
    <property type="match status" value="1"/>
</dbReference>
<dbReference type="PANTHER" id="PTHR43384">
    <property type="entry name" value="SEPTUM SITE-DETERMINING PROTEIN MIND HOMOLOG, CHLOROPLASTIC-RELATED"/>
    <property type="match status" value="1"/>
</dbReference>
<dbReference type="SUPFAM" id="SSF52540">
    <property type="entry name" value="P-loop containing nucleoside triphosphate hydrolases"/>
    <property type="match status" value="1"/>
</dbReference>
<organism>
    <name type="scientific">Mycobacterium tuberculosis (strain CDC 1551 / Oshkosh)</name>
    <dbReference type="NCBI Taxonomy" id="83331"/>
    <lineage>
        <taxon>Bacteria</taxon>
        <taxon>Bacillati</taxon>
        <taxon>Actinomycetota</taxon>
        <taxon>Actinomycetes</taxon>
        <taxon>Mycobacteriales</taxon>
        <taxon>Mycobacteriaceae</taxon>
        <taxon>Mycobacterium</taxon>
        <taxon>Mycobacterium tuberculosis complex</taxon>
    </lineage>
</organism>
<keyword id="KW-1185">Reference proteome</keyword>
<gene>
    <name type="ordered locus">MT3760</name>
</gene>
<accession>P9WKX6</accession>
<accession>L0TD64</accession>
<accession>O69628</accession>
<accession>Q7D546</accession>
<evidence type="ECO:0000250" key="1"/>
<evidence type="ECO:0000269" key="2">
    <source>
    </source>
</evidence>
<evidence type="ECO:0000305" key="3"/>
<reference key="1">
    <citation type="journal article" date="2002" name="J. Bacteriol.">
        <title>Whole-genome comparison of Mycobacterium tuberculosis clinical and laboratory strains.</title>
        <authorList>
            <person name="Fleischmann R.D."/>
            <person name="Alland D."/>
            <person name="Eisen J.A."/>
            <person name="Carpenter L."/>
            <person name="White O."/>
            <person name="Peterson J.D."/>
            <person name="DeBoy R.T."/>
            <person name="Dodson R.J."/>
            <person name="Gwinn M.L."/>
            <person name="Haft D.H."/>
            <person name="Hickey E.K."/>
            <person name="Kolonay J.F."/>
            <person name="Nelson W.C."/>
            <person name="Umayam L.A."/>
            <person name="Ermolaeva M.D."/>
            <person name="Salzberg S.L."/>
            <person name="Delcher A."/>
            <person name="Utterback T.R."/>
            <person name="Weidman J.F."/>
            <person name="Khouri H.M."/>
            <person name="Gill J."/>
            <person name="Mikula A."/>
            <person name="Bishai W."/>
            <person name="Jacobs W.R. Jr."/>
            <person name="Venter J.C."/>
            <person name="Fraser C.M."/>
        </authorList>
    </citation>
    <scope>NUCLEOTIDE SEQUENCE [LARGE SCALE GENOMIC DNA]</scope>
    <source>
        <strain>CDC 1551 / Oshkosh</strain>
    </source>
</reference>
<reference key="2">
    <citation type="journal article" date="2003" name="Proc. Natl. Acad. Sci. U.S.A.">
        <title>A postgenomic method for predicting essential genes at subsaturation levels of mutagenesis: application to Mycobacterium tuberculosis.</title>
        <authorList>
            <person name="Lamichhane G."/>
            <person name="Zignol M."/>
            <person name="Blades N.J."/>
            <person name="Geiman D.E."/>
            <person name="Dougherty A."/>
            <person name="Grosset J."/>
            <person name="Broman K.W."/>
            <person name="Bishai W.R."/>
        </authorList>
    </citation>
    <scope>DISRUPTION PHENOTYPE</scope>
    <source>
        <strain>CDC 1551 / Oshkosh</strain>
    </source>
</reference>
<protein>
    <recommendedName>
        <fullName>Uncharacterized protein MT3760</fullName>
    </recommendedName>
</protein>
<comment type="function">
    <text evidence="1">May play a role in septum formation.</text>
</comment>
<comment type="disruption phenotype">
    <text evidence="2">Not essential for growth.</text>
</comment>
<comment type="sequence caution" evidence="3">
    <conflict type="erroneous initiation">
        <sequence resource="EMBL-CDS" id="AAK48124"/>
    </conflict>
</comment>
<proteinExistence type="inferred from homology"/>
<feature type="chain" id="PRO_0000427577" description="Uncharacterized protein MT3760">
    <location>
        <begin position="1"/>
        <end position="350"/>
    </location>
</feature>
<sequence>MLTDPGLRDELDRVAAAVGVRVVHLGGRHPVSRKTWSAAAAVVLDHAAADRCGRLALPRRTHVSVLTGTEAATATWAAAITVGAQHVLRMPEQEGELVRELAEAAESARDDGICGAVVAVIGGRGGAGASLFAVALAQAAADALLVDLDPWAGGIDLLVGGETAPGLRWPDLALQGGRLNWSAVRAALPRPRGISVLSGTRRGYELDAGPVDAVIDAGRRGGVTVVCDLPRRLTDATQAALDAADLVVLVSPCDVRACAAAATMAPVLTAINPNLGLVVRGPSPGGLRAAEVADVAGVPLLASMRAQPRLAEQLEHGGLRLRRRSVLASAARRVLGVLPRAGSGRHGRAA</sequence>
<name>Y3660_MYCTO</name>